<organism>
    <name type="scientific">Burkholderia pseudomallei (strain 1710b)</name>
    <dbReference type="NCBI Taxonomy" id="320372"/>
    <lineage>
        <taxon>Bacteria</taxon>
        <taxon>Pseudomonadati</taxon>
        <taxon>Pseudomonadota</taxon>
        <taxon>Betaproteobacteria</taxon>
        <taxon>Burkholderiales</taxon>
        <taxon>Burkholderiaceae</taxon>
        <taxon>Burkholderia</taxon>
        <taxon>pseudomallei group</taxon>
    </lineage>
</organism>
<comment type="function">
    <text evidence="1">This protein is one of the two subunits of integration host factor, a specific DNA-binding protein that functions in genetic recombination as well as in transcriptional and translational control.</text>
</comment>
<comment type="subunit">
    <text evidence="1">Heterodimer of an alpha and a beta chain.</text>
</comment>
<comment type="similarity">
    <text evidence="1">Belongs to the bacterial histone-like protein family.</text>
</comment>
<feature type="chain" id="PRO_1000122199" description="Integration host factor subunit beta">
    <location>
        <begin position="1"/>
        <end position="107"/>
    </location>
</feature>
<feature type="region of interest" description="Disordered" evidence="2">
    <location>
        <begin position="55"/>
        <end position="107"/>
    </location>
</feature>
<feature type="compositionally biased region" description="Basic and acidic residues" evidence="2">
    <location>
        <begin position="65"/>
        <end position="101"/>
    </location>
</feature>
<accession>Q3JPY2</accession>
<sequence length="107" mass="11918">MTKSELVAQLASRFPQLVLKDADFAVKTMLDAMSDALSKGHRIEIRGFGSFGLNRRPARVGRNPKSGEKVQVPEKHVPHFKPGKELRERVDGRAGEPLKNDEPEDAQ</sequence>
<keyword id="KW-0233">DNA recombination</keyword>
<keyword id="KW-0238">DNA-binding</keyword>
<keyword id="KW-0804">Transcription</keyword>
<keyword id="KW-0805">Transcription regulation</keyword>
<keyword id="KW-0810">Translation regulation</keyword>
<dbReference type="EMBL" id="CP000124">
    <property type="protein sequence ID" value="ABA49756.1"/>
    <property type="molecule type" value="Genomic_DNA"/>
</dbReference>
<dbReference type="RefSeq" id="WP_004189865.1">
    <property type="nucleotide sequence ID" value="NC_007434.1"/>
</dbReference>
<dbReference type="SMR" id="Q3JPY2"/>
<dbReference type="EnsemblBacteria" id="ABA49756">
    <property type="protein sequence ID" value="ABA49756"/>
    <property type="gene ID" value="BURPS1710b_2992"/>
</dbReference>
<dbReference type="KEGG" id="bpm:BURPS1710b_2992"/>
<dbReference type="HOGENOM" id="CLU_105066_2_0_4"/>
<dbReference type="Proteomes" id="UP000002700">
    <property type="component" value="Chromosome I"/>
</dbReference>
<dbReference type="GO" id="GO:0005694">
    <property type="term" value="C:chromosome"/>
    <property type="evidence" value="ECO:0007669"/>
    <property type="project" value="InterPro"/>
</dbReference>
<dbReference type="GO" id="GO:0005829">
    <property type="term" value="C:cytosol"/>
    <property type="evidence" value="ECO:0007669"/>
    <property type="project" value="TreeGrafter"/>
</dbReference>
<dbReference type="GO" id="GO:0003677">
    <property type="term" value="F:DNA binding"/>
    <property type="evidence" value="ECO:0007669"/>
    <property type="project" value="UniProtKB-UniRule"/>
</dbReference>
<dbReference type="GO" id="GO:0030527">
    <property type="term" value="F:structural constituent of chromatin"/>
    <property type="evidence" value="ECO:0007669"/>
    <property type="project" value="InterPro"/>
</dbReference>
<dbReference type="GO" id="GO:0006310">
    <property type="term" value="P:DNA recombination"/>
    <property type="evidence" value="ECO:0007669"/>
    <property type="project" value="UniProtKB-UniRule"/>
</dbReference>
<dbReference type="GO" id="GO:0006355">
    <property type="term" value="P:regulation of DNA-templated transcription"/>
    <property type="evidence" value="ECO:0007669"/>
    <property type="project" value="UniProtKB-UniRule"/>
</dbReference>
<dbReference type="GO" id="GO:0006417">
    <property type="term" value="P:regulation of translation"/>
    <property type="evidence" value="ECO:0007669"/>
    <property type="project" value="UniProtKB-UniRule"/>
</dbReference>
<dbReference type="CDD" id="cd13836">
    <property type="entry name" value="IHF_B"/>
    <property type="match status" value="1"/>
</dbReference>
<dbReference type="Gene3D" id="4.10.520.10">
    <property type="entry name" value="IHF-like DNA-binding proteins"/>
    <property type="match status" value="1"/>
</dbReference>
<dbReference type="HAMAP" id="MF_00381">
    <property type="entry name" value="IHF_beta"/>
    <property type="match status" value="1"/>
</dbReference>
<dbReference type="InterPro" id="IPR000119">
    <property type="entry name" value="Hist_DNA-bd"/>
</dbReference>
<dbReference type="InterPro" id="IPR010992">
    <property type="entry name" value="IHF-like_DNA-bd_dom_sf"/>
</dbReference>
<dbReference type="InterPro" id="IPR005685">
    <property type="entry name" value="IHF_beta"/>
</dbReference>
<dbReference type="NCBIfam" id="TIGR00988">
    <property type="entry name" value="hip"/>
    <property type="match status" value="1"/>
</dbReference>
<dbReference type="NCBIfam" id="NF001222">
    <property type="entry name" value="PRK00199.1"/>
    <property type="match status" value="1"/>
</dbReference>
<dbReference type="PANTHER" id="PTHR33175">
    <property type="entry name" value="DNA-BINDING PROTEIN HU"/>
    <property type="match status" value="1"/>
</dbReference>
<dbReference type="PANTHER" id="PTHR33175:SF5">
    <property type="entry name" value="INTEGRATION HOST FACTOR SUBUNIT BETA"/>
    <property type="match status" value="1"/>
</dbReference>
<dbReference type="Pfam" id="PF00216">
    <property type="entry name" value="Bac_DNA_binding"/>
    <property type="match status" value="1"/>
</dbReference>
<dbReference type="PRINTS" id="PR01727">
    <property type="entry name" value="DNABINDINGHU"/>
</dbReference>
<dbReference type="SMART" id="SM00411">
    <property type="entry name" value="BHL"/>
    <property type="match status" value="1"/>
</dbReference>
<dbReference type="SUPFAM" id="SSF47729">
    <property type="entry name" value="IHF-like DNA-binding proteins"/>
    <property type="match status" value="1"/>
</dbReference>
<evidence type="ECO:0000255" key="1">
    <source>
        <dbReference type="HAMAP-Rule" id="MF_00381"/>
    </source>
</evidence>
<evidence type="ECO:0000256" key="2">
    <source>
        <dbReference type="SAM" id="MobiDB-lite"/>
    </source>
</evidence>
<proteinExistence type="inferred from homology"/>
<name>IHFB_BURP1</name>
<protein>
    <recommendedName>
        <fullName evidence="1">Integration host factor subunit beta</fullName>
        <shortName evidence="1">IHF-beta</shortName>
    </recommendedName>
</protein>
<reference key="1">
    <citation type="journal article" date="2010" name="Genome Biol. Evol.">
        <title>Continuing evolution of Burkholderia mallei through genome reduction and large-scale rearrangements.</title>
        <authorList>
            <person name="Losada L."/>
            <person name="Ronning C.M."/>
            <person name="DeShazer D."/>
            <person name="Woods D."/>
            <person name="Fedorova N."/>
            <person name="Kim H.S."/>
            <person name="Shabalina S.A."/>
            <person name="Pearson T.R."/>
            <person name="Brinkac L."/>
            <person name="Tan P."/>
            <person name="Nandi T."/>
            <person name="Crabtree J."/>
            <person name="Badger J."/>
            <person name="Beckstrom-Sternberg S."/>
            <person name="Saqib M."/>
            <person name="Schutzer S.E."/>
            <person name="Keim P."/>
            <person name="Nierman W.C."/>
        </authorList>
    </citation>
    <scope>NUCLEOTIDE SEQUENCE [LARGE SCALE GENOMIC DNA]</scope>
    <source>
        <strain>1710b</strain>
    </source>
</reference>
<gene>
    <name evidence="1" type="primary">ihfB</name>
    <name evidence="1" type="synonym">himD</name>
    <name type="ordered locus">BURPS1710b_2992</name>
</gene>